<protein>
    <recommendedName>
        <fullName evidence="1">Phenylalanine--tRNA ligase alpha subunit</fullName>
        <ecNumber evidence="1">6.1.1.20</ecNumber>
    </recommendedName>
    <alternativeName>
        <fullName evidence="1">Phenylalanyl-tRNA synthetase alpha subunit</fullName>
        <shortName evidence="1">PheRS</shortName>
    </alternativeName>
</protein>
<accession>B2K664</accession>
<evidence type="ECO:0000255" key="1">
    <source>
        <dbReference type="HAMAP-Rule" id="MF_00281"/>
    </source>
</evidence>
<organism>
    <name type="scientific">Yersinia pseudotuberculosis serotype IB (strain PB1/+)</name>
    <dbReference type="NCBI Taxonomy" id="502801"/>
    <lineage>
        <taxon>Bacteria</taxon>
        <taxon>Pseudomonadati</taxon>
        <taxon>Pseudomonadota</taxon>
        <taxon>Gammaproteobacteria</taxon>
        <taxon>Enterobacterales</taxon>
        <taxon>Yersiniaceae</taxon>
        <taxon>Yersinia</taxon>
    </lineage>
</organism>
<keyword id="KW-0030">Aminoacyl-tRNA synthetase</keyword>
<keyword id="KW-0067">ATP-binding</keyword>
<keyword id="KW-0963">Cytoplasm</keyword>
<keyword id="KW-0436">Ligase</keyword>
<keyword id="KW-0460">Magnesium</keyword>
<keyword id="KW-0479">Metal-binding</keyword>
<keyword id="KW-0547">Nucleotide-binding</keyword>
<keyword id="KW-0648">Protein biosynthesis</keyword>
<sequence>MPHLAELVAKAKAAVEDAQDIAALDLVRVEYLGKKGHLTLQMTSLRELPAEERPAAGAVINQAKQEVQEALNARKEKLESAVLNARLAAETIDVSLPGRRMENGGLHPVTRTIERIETFFGELGFSVESGPEIEDDYHNFDALNIPAHHPARADHDTFWFDATRLLRTQTSGVQIRTMQEQQPPIRIIVPGRVYRNDYDQTHTPMFHQMEGLIVDRDISFTNLKGTLHDFLRNFFEEDLQIRFRPSYFPFTEPSAEVDVMGKNGKWLEVLGCGMVHPNVLRNVGIDPEIYSGFAFGMGMERLTMLRYGVTDLRAFFENDLRFLKQFK</sequence>
<dbReference type="EC" id="6.1.1.20" evidence="1"/>
<dbReference type="EMBL" id="CP001048">
    <property type="protein sequence ID" value="ACC89373.1"/>
    <property type="molecule type" value="Genomic_DNA"/>
</dbReference>
<dbReference type="RefSeq" id="WP_011192546.1">
    <property type="nucleotide sequence ID" value="NZ_CP009780.1"/>
</dbReference>
<dbReference type="SMR" id="B2K664"/>
<dbReference type="GeneID" id="49785658"/>
<dbReference type="KEGG" id="ypb:YPTS_2412"/>
<dbReference type="PATRIC" id="fig|502801.10.peg.1818"/>
<dbReference type="GO" id="GO:0005737">
    <property type="term" value="C:cytoplasm"/>
    <property type="evidence" value="ECO:0007669"/>
    <property type="project" value="UniProtKB-SubCell"/>
</dbReference>
<dbReference type="GO" id="GO:0005524">
    <property type="term" value="F:ATP binding"/>
    <property type="evidence" value="ECO:0007669"/>
    <property type="project" value="UniProtKB-UniRule"/>
</dbReference>
<dbReference type="GO" id="GO:0000287">
    <property type="term" value="F:magnesium ion binding"/>
    <property type="evidence" value="ECO:0007669"/>
    <property type="project" value="UniProtKB-UniRule"/>
</dbReference>
<dbReference type="GO" id="GO:0004826">
    <property type="term" value="F:phenylalanine-tRNA ligase activity"/>
    <property type="evidence" value="ECO:0007669"/>
    <property type="project" value="UniProtKB-UniRule"/>
</dbReference>
<dbReference type="GO" id="GO:0000049">
    <property type="term" value="F:tRNA binding"/>
    <property type="evidence" value="ECO:0007669"/>
    <property type="project" value="InterPro"/>
</dbReference>
<dbReference type="GO" id="GO:0006432">
    <property type="term" value="P:phenylalanyl-tRNA aminoacylation"/>
    <property type="evidence" value="ECO:0007669"/>
    <property type="project" value="UniProtKB-UniRule"/>
</dbReference>
<dbReference type="CDD" id="cd00496">
    <property type="entry name" value="PheRS_alpha_core"/>
    <property type="match status" value="1"/>
</dbReference>
<dbReference type="FunFam" id="3.30.930.10:FF:000003">
    <property type="entry name" value="Phenylalanine--tRNA ligase alpha subunit"/>
    <property type="match status" value="1"/>
</dbReference>
<dbReference type="Gene3D" id="3.30.930.10">
    <property type="entry name" value="Bira Bifunctional Protein, Domain 2"/>
    <property type="match status" value="1"/>
</dbReference>
<dbReference type="HAMAP" id="MF_00281">
    <property type="entry name" value="Phe_tRNA_synth_alpha1"/>
    <property type="match status" value="1"/>
</dbReference>
<dbReference type="InterPro" id="IPR006195">
    <property type="entry name" value="aa-tRNA-synth_II"/>
</dbReference>
<dbReference type="InterPro" id="IPR045864">
    <property type="entry name" value="aa-tRNA-synth_II/BPL/LPL"/>
</dbReference>
<dbReference type="InterPro" id="IPR004529">
    <property type="entry name" value="Phe-tRNA-synth_IIc_asu"/>
</dbReference>
<dbReference type="InterPro" id="IPR004188">
    <property type="entry name" value="Phe-tRNA_ligase_II_N"/>
</dbReference>
<dbReference type="InterPro" id="IPR022911">
    <property type="entry name" value="Phe_tRNA_ligase_alpha1_bac"/>
</dbReference>
<dbReference type="InterPro" id="IPR002319">
    <property type="entry name" value="Phenylalanyl-tRNA_Synthase"/>
</dbReference>
<dbReference type="InterPro" id="IPR010978">
    <property type="entry name" value="tRNA-bd_arm"/>
</dbReference>
<dbReference type="NCBIfam" id="TIGR00468">
    <property type="entry name" value="pheS"/>
    <property type="match status" value="1"/>
</dbReference>
<dbReference type="PANTHER" id="PTHR11538:SF41">
    <property type="entry name" value="PHENYLALANINE--TRNA LIGASE, MITOCHONDRIAL"/>
    <property type="match status" value="1"/>
</dbReference>
<dbReference type="PANTHER" id="PTHR11538">
    <property type="entry name" value="PHENYLALANYL-TRNA SYNTHETASE"/>
    <property type="match status" value="1"/>
</dbReference>
<dbReference type="Pfam" id="PF02912">
    <property type="entry name" value="Phe_tRNA-synt_N"/>
    <property type="match status" value="1"/>
</dbReference>
<dbReference type="Pfam" id="PF01409">
    <property type="entry name" value="tRNA-synt_2d"/>
    <property type="match status" value="1"/>
</dbReference>
<dbReference type="SUPFAM" id="SSF55681">
    <property type="entry name" value="Class II aaRS and biotin synthetases"/>
    <property type="match status" value="1"/>
</dbReference>
<dbReference type="SUPFAM" id="SSF46589">
    <property type="entry name" value="tRNA-binding arm"/>
    <property type="match status" value="1"/>
</dbReference>
<dbReference type="PROSITE" id="PS50862">
    <property type="entry name" value="AA_TRNA_LIGASE_II"/>
    <property type="match status" value="1"/>
</dbReference>
<reference key="1">
    <citation type="submission" date="2008-04" db="EMBL/GenBank/DDBJ databases">
        <title>Complete sequence of Yersinia pseudotuberculosis PB1/+.</title>
        <authorList>
            <person name="Copeland A."/>
            <person name="Lucas S."/>
            <person name="Lapidus A."/>
            <person name="Glavina del Rio T."/>
            <person name="Dalin E."/>
            <person name="Tice H."/>
            <person name="Bruce D."/>
            <person name="Goodwin L."/>
            <person name="Pitluck S."/>
            <person name="Munk A.C."/>
            <person name="Brettin T."/>
            <person name="Detter J.C."/>
            <person name="Han C."/>
            <person name="Tapia R."/>
            <person name="Schmutz J."/>
            <person name="Larimer F."/>
            <person name="Land M."/>
            <person name="Hauser L."/>
            <person name="Challacombe J.F."/>
            <person name="Green L."/>
            <person name="Lindler L.E."/>
            <person name="Nikolich M.P."/>
            <person name="Richardson P."/>
        </authorList>
    </citation>
    <scope>NUCLEOTIDE SEQUENCE [LARGE SCALE GENOMIC DNA]</scope>
    <source>
        <strain>PB1/+</strain>
    </source>
</reference>
<feature type="chain" id="PRO_1000114932" description="Phenylalanine--tRNA ligase alpha subunit">
    <location>
        <begin position="1"/>
        <end position="327"/>
    </location>
</feature>
<feature type="binding site" evidence="1">
    <location>
        <position position="252"/>
    </location>
    <ligand>
        <name>Mg(2+)</name>
        <dbReference type="ChEBI" id="CHEBI:18420"/>
        <note>shared with beta subunit</note>
    </ligand>
</feature>
<gene>
    <name evidence="1" type="primary">pheS</name>
    <name type="ordered locus">YPTS_2412</name>
</gene>
<comment type="catalytic activity">
    <reaction evidence="1">
        <text>tRNA(Phe) + L-phenylalanine + ATP = L-phenylalanyl-tRNA(Phe) + AMP + diphosphate + H(+)</text>
        <dbReference type="Rhea" id="RHEA:19413"/>
        <dbReference type="Rhea" id="RHEA-COMP:9668"/>
        <dbReference type="Rhea" id="RHEA-COMP:9699"/>
        <dbReference type="ChEBI" id="CHEBI:15378"/>
        <dbReference type="ChEBI" id="CHEBI:30616"/>
        <dbReference type="ChEBI" id="CHEBI:33019"/>
        <dbReference type="ChEBI" id="CHEBI:58095"/>
        <dbReference type="ChEBI" id="CHEBI:78442"/>
        <dbReference type="ChEBI" id="CHEBI:78531"/>
        <dbReference type="ChEBI" id="CHEBI:456215"/>
        <dbReference type="EC" id="6.1.1.20"/>
    </reaction>
</comment>
<comment type="cofactor">
    <cofactor evidence="1">
        <name>Mg(2+)</name>
        <dbReference type="ChEBI" id="CHEBI:18420"/>
    </cofactor>
    <text evidence="1">Binds 2 magnesium ions per tetramer.</text>
</comment>
<comment type="subunit">
    <text evidence="1">Tetramer of two alpha and two beta subunits.</text>
</comment>
<comment type="subcellular location">
    <subcellularLocation>
        <location evidence="1">Cytoplasm</location>
    </subcellularLocation>
</comment>
<comment type="similarity">
    <text evidence="1">Belongs to the class-II aminoacyl-tRNA synthetase family. Phe-tRNA synthetase alpha subunit type 1 subfamily.</text>
</comment>
<name>SYFA_YERPB</name>
<proteinExistence type="inferred from homology"/>